<organism>
    <name type="scientific">Synechococcus sp. (strain RCC307)</name>
    <dbReference type="NCBI Taxonomy" id="316278"/>
    <lineage>
        <taxon>Bacteria</taxon>
        <taxon>Bacillati</taxon>
        <taxon>Cyanobacteriota</taxon>
        <taxon>Cyanophyceae</taxon>
        <taxon>Synechococcales</taxon>
        <taxon>Synechococcaceae</taxon>
        <taxon>Synechococcus</taxon>
    </lineage>
</organism>
<feature type="chain" id="PRO_1000012953" description="Lysine--tRNA ligase">
    <location>
        <begin position="1"/>
        <end position="502"/>
    </location>
</feature>
<feature type="binding site" evidence="1">
    <location>
        <position position="399"/>
    </location>
    <ligand>
        <name>Mg(2+)</name>
        <dbReference type="ChEBI" id="CHEBI:18420"/>
        <label>1</label>
    </ligand>
</feature>
<feature type="binding site" evidence="1">
    <location>
        <position position="406"/>
    </location>
    <ligand>
        <name>Mg(2+)</name>
        <dbReference type="ChEBI" id="CHEBI:18420"/>
        <label>1</label>
    </ligand>
</feature>
<feature type="binding site" evidence="1">
    <location>
        <position position="406"/>
    </location>
    <ligand>
        <name>Mg(2+)</name>
        <dbReference type="ChEBI" id="CHEBI:18420"/>
        <label>2</label>
    </ligand>
</feature>
<dbReference type="EC" id="6.1.1.6" evidence="1"/>
<dbReference type="EMBL" id="CT978603">
    <property type="protein sequence ID" value="CAK27017.1"/>
    <property type="molecule type" value="Genomic_DNA"/>
</dbReference>
<dbReference type="SMR" id="A5GQ58"/>
<dbReference type="STRING" id="316278.SynRCC307_0114"/>
<dbReference type="KEGG" id="syr:SynRCC307_0114"/>
<dbReference type="eggNOG" id="COG1190">
    <property type="taxonomic scope" value="Bacteria"/>
</dbReference>
<dbReference type="HOGENOM" id="CLU_008255_6_0_3"/>
<dbReference type="OrthoDB" id="9802326at2"/>
<dbReference type="Proteomes" id="UP000001115">
    <property type="component" value="Chromosome"/>
</dbReference>
<dbReference type="GO" id="GO:0005829">
    <property type="term" value="C:cytosol"/>
    <property type="evidence" value="ECO:0007669"/>
    <property type="project" value="TreeGrafter"/>
</dbReference>
<dbReference type="GO" id="GO:0005524">
    <property type="term" value="F:ATP binding"/>
    <property type="evidence" value="ECO:0007669"/>
    <property type="project" value="UniProtKB-UniRule"/>
</dbReference>
<dbReference type="GO" id="GO:0004824">
    <property type="term" value="F:lysine-tRNA ligase activity"/>
    <property type="evidence" value="ECO:0007669"/>
    <property type="project" value="UniProtKB-UniRule"/>
</dbReference>
<dbReference type="GO" id="GO:0000287">
    <property type="term" value="F:magnesium ion binding"/>
    <property type="evidence" value="ECO:0007669"/>
    <property type="project" value="UniProtKB-UniRule"/>
</dbReference>
<dbReference type="GO" id="GO:0000049">
    <property type="term" value="F:tRNA binding"/>
    <property type="evidence" value="ECO:0007669"/>
    <property type="project" value="TreeGrafter"/>
</dbReference>
<dbReference type="GO" id="GO:0006430">
    <property type="term" value="P:lysyl-tRNA aminoacylation"/>
    <property type="evidence" value="ECO:0007669"/>
    <property type="project" value="UniProtKB-UniRule"/>
</dbReference>
<dbReference type="CDD" id="cd00775">
    <property type="entry name" value="LysRS_core"/>
    <property type="match status" value="1"/>
</dbReference>
<dbReference type="CDD" id="cd04322">
    <property type="entry name" value="LysRS_N"/>
    <property type="match status" value="1"/>
</dbReference>
<dbReference type="FunFam" id="2.40.50.140:FF:000024">
    <property type="entry name" value="Lysine--tRNA ligase"/>
    <property type="match status" value="1"/>
</dbReference>
<dbReference type="Gene3D" id="3.30.930.10">
    <property type="entry name" value="Bira Bifunctional Protein, Domain 2"/>
    <property type="match status" value="1"/>
</dbReference>
<dbReference type="Gene3D" id="2.40.50.140">
    <property type="entry name" value="Nucleic acid-binding proteins"/>
    <property type="match status" value="1"/>
</dbReference>
<dbReference type="HAMAP" id="MF_00252">
    <property type="entry name" value="Lys_tRNA_synth_class2"/>
    <property type="match status" value="1"/>
</dbReference>
<dbReference type="InterPro" id="IPR004364">
    <property type="entry name" value="Aa-tRNA-synt_II"/>
</dbReference>
<dbReference type="InterPro" id="IPR006195">
    <property type="entry name" value="aa-tRNA-synth_II"/>
</dbReference>
<dbReference type="InterPro" id="IPR045864">
    <property type="entry name" value="aa-tRNA-synth_II/BPL/LPL"/>
</dbReference>
<dbReference type="InterPro" id="IPR002313">
    <property type="entry name" value="Lys-tRNA-ligase_II"/>
</dbReference>
<dbReference type="InterPro" id="IPR044136">
    <property type="entry name" value="Lys-tRNA-ligase_II_N"/>
</dbReference>
<dbReference type="InterPro" id="IPR018149">
    <property type="entry name" value="Lys-tRNA-synth_II_C"/>
</dbReference>
<dbReference type="InterPro" id="IPR012340">
    <property type="entry name" value="NA-bd_OB-fold"/>
</dbReference>
<dbReference type="InterPro" id="IPR004365">
    <property type="entry name" value="NA-bd_OB_tRNA"/>
</dbReference>
<dbReference type="NCBIfam" id="TIGR00499">
    <property type="entry name" value="lysS_bact"/>
    <property type="match status" value="1"/>
</dbReference>
<dbReference type="NCBIfam" id="NF001756">
    <property type="entry name" value="PRK00484.1"/>
    <property type="match status" value="1"/>
</dbReference>
<dbReference type="PANTHER" id="PTHR42918:SF15">
    <property type="entry name" value="LYSINE--TRNA LIGASE, CHLOROPLASTIC_MITOCHONDRIAL"/>
    <property type="match status" value="1"/>
</dbReference>
<dbReference type="PANTHER" id="PTHR42918">
    <property type="entry name" value="LYSYL-TRNA SYNTHETASE"/>
    <property type="match status" value="1"/>
</dbReference>
<dbReference type="Pfam" id="PF00152">
    <property type="entry name" value="tRNA-synt_2"/>
    <property type="match status" value="1"/>
</dbReference>
<dbReference type="Pfam" id="PF01336">
    <property type="entry name" value="tRNA_anti-codon"/>
    <property type="match status" value="1"/>
</dbReference>
<dbReference type="PRINTS" id="PR00982">
    <property type="entry name" value="TRNASYNTHLYS"/>
</dbReference>
<dbReference type="SUPFAM" id="SSF55681">
    <property type="entry name" value="Class II aaRS and biotin synthetases"/>
    <property type="match status" value="1"/>
</dbReference>
<dbReference type="SUPFAM" id="SSF50249">
    <property type="entry name" value="Nucleic acid-binding proteins"/>
    <property type="match status" value="1"/>
</dbReference>
<dbReference type="PROSITE" id="PS50862">
    <property type="entry name" value="AA_TRNA_LIGASE_II"/>
    <property type="match status" value="1"/>
</dbReference>
<evidence type="ECO:0000255" key="1">
    <source>
        <dbReference type="HAMAP-Rule" id="MF_00252"/>
    </source>
</evidence>
<protein>
    <recommendedName>
        <fullName evidence="1">Lysine--tRNA ligase</fullName>
        <ecNumber evidence="1">6.1.1.6</ecNumber>
    </recommendedName>
    <alternativeName>
        <fullName evidence="1">Lysyl-tRNA synthetase</fullName>
        <shortName evidence="1">LysRS</shortName>
    </alternativeName>
</protein>
<sequence>MSELRDTRLEKAQALIECGQVPYALRFEPSHRTAELQQAHADLPNGEERDVSVAIAGRVMTRRVMGKLAFFTLADETGPIQLFLEKAALGDAFKQITSLVDAGDWIGVKGTLRRTDRGELSVKAAQWQMLSKSLQPLPDKWHGLADVEKRYRQRYLDLIVSPDTRDTFRRRAQLVSGIRRWLDERDFLEIETPVLQSEPGGADARPFETHHNALDLPLTLRIATELHLKRLVVGGFERVYELGRIFRNEGVSTRHNPEFTSVEIYQAFADYNDMMDLTEELISSVTQQVCGSTLINYQGTEINLAPGWRRATMHELVKEATGLDFAGFSSREDAAAAMEAKGLQTPALADSVGRLLNEAFEQAVEETLIQPTFVTDYPVEISPLARSHRSKPGLVERFELFIVGREHGNAFSELTDPVDQRQRLEAQQERRAAGDLEAQRVDEDFLNALEVGMPPTGGLGIGIDRLVMLLTDSPSIRDVIAFPLLKPESRDGSAAVDNGSTE</sequence>
<reference key="1">
    <citation type="submission" date="2006-05" db="EMBL/GenBank/DDBJ databases">
        <authorList>
            <consortium name="Genoscope"/>
        </authorList>
    </citation>
    <scope>NUCLEOTIDE SEQUENCE [LARGE SCALE GENOMIC DNA]</scope>
    <source>
        <strain>RCC307</strain>
    </source>
</reference>
<comment type="catalytic activity">
    <reaction evidence="1">
        <text>tRNA(Lys) + L-lysine + ATP = L-lysyl-tRNA(Lys) + AMP + diphosphate</text>
        <dbReference type="Rhea" id="RHEA:20792"/>
        <dbReference type="Rhea" id="RHEA-COMP:9696"/>
        <dbReference type="Rhea" id="RHEA-COMP:9697"/>
        <dbReference type="ChEBI" id="CHEBI:30616"/>
        <dbReference type="ChEBI" id="CHEBI:32551"/>
        <dbReference type="ChEBI" id="CHEBI:33019"/>
        <dbReference type="ChEBI" id="CHEBI:78442"/>
        <dbReference type="ChEBI" id="CHEBI:78529"/>
        <dbReference type="ChEBI" id="CHEBI:456215"/>
        <dbReference type="EC" id="6.1.1.6"/>
    </reaction>
</comment>
<comment type="cofactor">
    <cofactor evidence="1">
        <name>Mg(2+)</name>
        <dbReference type="ChEBI" id="CHEBI:18420"/>
    </cofactor>
    <text evidence="1">Binds 3 Mg(2+) ions per subunit.</text>
</comment>
<comment type="subunit">
    <text evidence="1">Homodimer.</text>
</comment>
<comment type="subcellular location">
    <subcellularLocation>
        <location evidence="1">Cytoplasm</location>
    </subcellularLocation>
</comment>
<comment type="similarity">
    <text evidence="1">Belongs to the class-II aminoacyl-tRNA synthetase family.</text>
</comment>
<keyword id="KW-0030">Aminoacyl-tRNA synthetase</keyword>
<keyword id="KW-0067">ATP-binding</keyword>
<keyword id="KW-0963">Cytoplasm</keyword>
<keyword id="KW-0436">Ligase</keyword>
<keyword id="KW-0460">Magnesium</keyword>
<keyword id="KW-0479">Metal-binding</keyword>
<keyword id="KW-0547">Nucleotide-binding</keyword>
<keyword id="KW-0648">Protein biosynthesis</keyword>
<keyword id="KW-1185">Reference proteome</keyword>
<proteinExistence type="inferred from homology"/>
<accession>A5GQ58</accession>
<name>SYK_SYNR3</name>
<gene>
    <name evidence="1" type="primary">lysS</name>
    <name type="ordered locus">SynRCC307_0114</name>
</gene>